<feature type="chain" id="PRO_0000115864" description="DNA helicase/primase complex-associated protein">
    <location>
        <begin position="1"/>
        <end position="771"/>
    </location>
</feature>
<sequence>MDATQITLVRESGHICAASIYTSWTQSGQLTQNGLSVLYYLLCKNSCGKYVPKFAEITVQQEDLCRYSRHGGSVSAATFASICRAASSAALDAWPLEPLGNADTWRCLHGTALATLRRVLGFKSFYSPVTFETDTNTGLLLKTIPDEHALNNDNTPSTGVLRANFPVAIDVSAVSACNAHTQGTSLAYARLTALKSNGDTQQQTPLDVEVITPKAYIRRKYKSTFSPPIEREGQTSDLFNLEERRLVLSGNRAIVVRVLLPCYFDCLTTDSTVTSSLSILATYRLWYAAAFGKPGVVRPIFAYLGPELNPKGEDRDYFCTVGFPGWTTLRTQTPAVESIRTATEMYMETDGLWPVTGIQAFHYLAPWGQHPPLPPRVQDLIGQIPQDTGHADATVNWDAGRISTVFKQPVQLQDRWMAKFDFSAFFPTIYCAMFPMHFRLGKIVLARMRRGMGCLKPALVSFFGGLRHILPSIYKAIIFIANEISLCVEQTALEQGFAICTYIKDGFWGIFTDLHTRNVCSDQARCSALNLAATCERAVTGLLRIQLGLNFTPAMEPVLRVEGVYTHAFTWCTTGSWLWNLQTNTPPDLVGVPWRSQAARDLKERLSGLLCTATKIRERIQENCIWDHVLYDIWAGQVVEAARKTYVDFFEHVFDRRYTPVYWSLQEQNSETKAIPASYLTYGHMQDKDYKPRQIIMVRNPNPHGPPTVVYWELLPSCACIPPIDCAAHLKPLIHTFVTIINHLLDAHNDFSSPSLKFTDDPLASYNFLFL</sequence>
<organismHost>
    <name type="scientific">Homo sapiens</name>
    <name type="common">Human</name>
    <dbReference type="NCBI Taxonomy" id="9606"/>
</organismHost>
<organism>
    <name type="scientific">Varicella-zoster virus (strain Dumas)</name>
    <name type="common">HHV-3</name>
    <name type="synonym">Human herpesvirus 3</name>
    <dbReference type="NCBI Taxonomy" id="10338"/>
    <lineage>
        <taxon>Viruses</taxon>
        <taxon>Duplodnaviria</taxon>
        <taxon>Heunggongvirae</taxon>
        <taxon>Peploviricota</taxon>
        <taxon>Herviviricetes</taxon>
        <taxon>Herpesvirales</taxon>
        <taxon>Orthoherpesviridae</taxon>
        <taxon>Alphaherpesvirinae</taxon>
        <taxon>Varicellovirus</taxon>
        <taxon>Varicellovirus humanalpha3</taxon>
        <taxon>Human herpesvirus 3</taxon>
    </lineage>
</organism>
<gene>
    <name type="ORF">ORF52</name>
</gene>
<proteinExistence type="inferred from homology"/>
<evidence type="ECO:0000255" key="1">
    <source>
        <dbReference type="HAMAP-Rule" id="MF_04010"/>
    </source>
</evidence>
<keyword id="KW-0235">DNA replication</keyword>
<keyword id="KW-1048">Host nucleus</keyword>
<keyword id="KW-1185">Reference proteome</keyword>
<keyword id="KW-0808">Transferase</keyword>
<comment type="function">
    <text evidence="1">Component of the helicase/primase complex. Unwinds the DNA at the replication forks and generates single-stranded DNA for both leading and lagging strand synthesis. The primase synthesizes short RNA primers on the lagging strand that the polymerase presumably elongates using dNTPs. The primase-associated factor has no known catalytic activity in the complex and may serve to facilitate the formation of the replisome by directly interacting with the origin-binding protein and the polymerase.</text>
</comment>
<comment type="subunit">
    <text evidence="1">Associates with the primase and the helicase to form the helicase-primase complex. Interacts with the origin-binding protein. Interacts with the polymerase catalytic subunit.</text>
</comment>
<comment type="subcellular location">
    <subcellularLocation>
        <location evidence="1">Host nucleus</location>
    </subcellularLocation>
</comment>
<comment type="similarity">
    <text evidence="1">Belongs to the herpesviridae HEPA family.</text>
</comment>
<dbReference type="EMBL" id="X04370">
    <property type="protein sequence ID" value="CAA27935.1"/>
    <property type="molecule type" value="Genomic_DNA"/>
</dbReference>
<dbReference type="PIR" id="H27344">
    <property type="entry name" value="WZBE52"/>
</dbReference>
<dbReference type="Proteomes" id="UP000002602">
    <property type="component" value="Genome"/>
</dbReference>
<dbReference type="GO" id="GO:0042025">
    <property type="term" value="C:host cell nucleus"/>
    <property type="evidence" value="ECO:0007669"/>
    <property type="project" value="UniProtKB-SubCell"/>
</dbReference>
<dbReference type="GO" id="GO:0016740">
    <property type="term" value="F:transferase activity"/>
    <property type="evidence" value="ECO:0007669"/>
    <property type="project" value="UniProtKB-KW"/>
</dbReference>
<dbReference type="GO" id="GO:0006260">
    <property type="term" value="P:DNA replication"/>
    <property type="evidence" value="ECO:0007669"/>
    <property type="project" value="UniProtKB-KW"/>
</dbReference>
<dbReference type="GO" id="GO:0019079">
    <property type="term" value="P:viral genome replication"/>
    <property type="evidence" value="ECO:0007669"/>
    <property type="project" value="InterPro"/>
</dbReference>
<dbReference type="HAMAP" id="MF_04010">
    <property type="entry name" value="HSV_HEPA"/>
    <property type="match status" value="1"/>
</dbReference>
<dbReference type="InterPro" id="IPR004996">
    <property type="entry name" value="HSV_HEPA"/>
</dbReference>
<dbReference type="Pfam" id="PF03324">
    <property type="entry name" value="Herpes_HEPA"/>
    <property type="match status" value="1"/>
</dbReference>
<protein>
    <recommendedName>
        <fullName evidence="1">DNA helicase/primase complex-associated protein</fullName>
        <shortName evidence="1">HEPA</shortName>
    </recommendedName>
    <alternativeName>
        <fullName evidence="1">Primase-associated factor</fullName>
    </alternativeName>
</protein>
<reference key="1">
    <citation type="journal article" date="1986" name="J. Gen. Virol.">
        <title>The complete DNA sequence of varicella-zoster virus.</title>
        <authorList>
            <person name="Davison A.J."/>
            <person name="Scott J.E."/>
        </authorList>
    </citation>
    <scope>NUCLEOTIDE SEQUENCE [LARGE SCALE GENOMIC DNA]</scope>
</reference>
<name>HEPA_VZVD</name>
<accession>P09300</accession>